<proteinExistence type="inferred from homology"/>
<dbReference type="EMBL" id="CP000481">
    <property type="protein sequence ID" value="ABK52083.1"/>
    <property type="molecule type" value="Genomic_DNA"/>
</dbReference>
<dbReference type="RefSeq" id="WP_011719146.1">
    <property type="nucleotide sequence ID" value="NC_008578.1"/>
</dbReference>
<dbReference type="SMR" id="A0LRM3"/>
<dbReference type="FunCoup" id="A0LRM3">
    <property type="interactions" value="303"/>
</dbReference>
<dbReference type="STRING" id="351607.Acel_0309"/>
<dbReference type="KEGG" id="ace:Acel_0309"/>
<dbReference type="eggNOG" id="COG0090">
    <property type="taxonomic scope" value="Bacteria"/>
</dbReference>
<dbReference type="HOGENOM" id="CLU_036235_2_1_11"/>
<dbReference type="InParanoid" id="A0LRM3"/>
<dbReference type="OrthoDB" id="9778722at2"/>
<dbReference type="Proteomes" id="UP000008221">
    <property type="component" value="Chromosome"/>
</dbReference>
<dbReference type="GO" id="GO:0015934">
    <property type="term" value="C:large ribosomal subunit"/>
    <property type="evidence" value="ECO:0007669"/>
    <property type="project" value="InterPro"/>
</dbReference>
<dbReference type="GO" id="GO:0019843">
    <property type="term" value="F:rRNA binding"/>
    <property type="evidence" value="ECO:0007669"/>
    <property type="project" value="UniProtKB-UniRule"/>
</dbReference>
<dbReference type="GO" id="GO:0003735">
    <property type="term" value="F:structural constituent of ribosome"/>
    <property type="evidence" value="ECO:0007669"/>
    <property type="project" value="InterPro"/>
</dbReference>
<dbReference type="GO" id="GO:0016740">
    <property type="term" value="F:transferase activity"/>
    <property type="evidence" value="ECO:0007669"/>
    <property type="project" value="InterPro"/>
</dbReference>
<dbReference type="GO" id="GO:0002181">
    <property type="term" value="P:cytoplasmic translation"/>
    <property type="evidence" value="ECO:0007669"/>
    <property type="project" value="TreeGrafter"/>
</dbReference>
<dbReference type="FunFam" id="2.30.30.30:FF:000001">
    <property type="entry name" value="50S ribosomal protein L2"/>
    <property type="match status" value="1"/>
</dbReference>
<dbReference type="FunFam" id="2.40.50.140:FF:000003">
    <property type="entry name" value="50S ribosomal protein L2"/>
    <property type="match status" value="1"/>
</dbReference>
<dbReference type="FunFam" id="4.10.950.10:FF:000001">
    <property type="entry name" value="50S ribosomal protein L2"/>
    <property type="match status" value="1"/>
</dbReference>
<dbReference type="Gene3D" id="2.30.30.30">
    <property type="match status" value="1"/>
</dbReference>
<dbReference type="Gene3D" id="2.40.50.140">
    <property type="entry name" value="Nucleic acid-binding proteins"/>
    <property type="match status" value="1"/>
</dbReference>
<dbReference type="Gene3D" id="4.10.950.10">
    <property type="entry name" value="Ribosomal protein L2, domain 3"/>
    <property type="match status" value="1"/>
</dbReference>
<dbReference type="HAMAP" id="MF_01320_B">
    <property type="entry name" value="Ribosomal_uL2_B"/>
    <property type="match status" value="1"/>
</dbReference>
<dbReference type="InterPro" id="IPR012340">
    <property type="entry name" value="NA-bd_OB-fold"/>
</dbReference>
<dbReference type="InterPro" id="IPR014722">
    <property type="entry name" value="Rib_uL2_dom2"/>
</dbReference>
<dbReference type="InterPro" id="IPR002171">
    <property type="entry name" value="Ribosomal_uL2"/>
</dbReference>
<dbReference type="InterPro" id="IPR005880">
    <property type="entry name" value="Ribosomal_uL2_bac/org-type"/>
</dbReference>
<dbReference type="InterPro" id="IPR022669">
    <property type="entry name" value="Ribosomal_uL2_C"/>
</dbReference>
<dbReference type="InterPro" id="IPR022671">
    <property type="entry name" value="Ribosomal_uL2_CS"/>
</dbReference>
<dbReference type="InterPro" id="IPR014726">
    <property type="entry name" value="Ribosomal_uL2_dom3"/>
</dbReference>
<dbReference type="InterPro" id="IPR022666">
    <property type="entry name" value="Ribosomal_uL2_RNA-bd_dom"/>
</dbReference>
<dbReference type="InterPro" id="IPR008991">
    <property type="entry name" value="Translation_prot_SH3-like_sf"/>
</dbReference>
<dbReference type="NCBIfam" id="TIGR01171">
    <property type="entry name" value="rplB_bact"/>
    <property type="match status" value="1"/>
</dbReference>
<dbReference type="PANTHER" id="PTHR13691:SF5">
    <property type="entry name" value="LARGE RIBOSOMAL SUBUNIT PROTEIN UL2M"/>
    <property type="match status" value="1"/>
</dbReference>
<dbReference type="PANTHER" id="PTHR13691">
    <property type="entry name" value="RIBOSOMAL PROTEIN L2"/>
    <property type="match status" value="1"/>
</dbReference>
<dbReference type="Pfam" id="PF00181">
    <property type="entry name" value="Ribosomal_L2"/>
    <property type="match status" value="1"/>
</dbReference>
<dbReference type="Pfam" id="PF03947">
    <property type="entry name" value="Ribosomal_L2_C"/>
    <property type="match status" value="1"/>
</dbReference>
<dbReference type="PIRSF" id="PIRSF002158">
    <property type="entry name" value="Ribosomal_L2"/>
    <property type="match status" value="1"/>
</dbReference>
<dbReference type="SMART" id="SM01383">
    <property type="entry name" value="Ribosomal_L2"/>
    <property type="match status" value="1"/>
</dbReference>
<dbReference type="SMART" id="SM01382">
    <property type="entry name" value="Ribosomal_L2_C"/>
    <property type="match status" value="1"/>
</dbReference>
<dbReference type="SUPFAM" id="SSF50249">
    <property type="entry name" value="Nucleic acid-binding proteins"/>
    <property type="match status" value="1"/>
</dbReference>
<dbReference type="SUPFAM" id="SSF50104">
    <property type="entry name" value="Translation proteins SH3-like domain"/>
    <property type="match status" value="1"/>
</dbReference>
<dbReference type="PROSITE" id="PS00467">
    <property type="entry name" value="RIBOSOMAL_L2"/>
    <property type="match status" value="1"/>
</dbReference>
<gene>
    <name evidence="1" type="primary">rplB</name>
    <name type="ordered locus">Acel_0309</name>
</gene>
<protein>
    <recommendedName>
        <fullName evidence="1">Large ribosomal subunit protein uL2</fullName>
    </recommendedName>
    <alternativeName>
        <fullName evidence="3">50S ribosomal protein L2</fullName>
    </alternativeName>
</protein>
<comment type="function">
    <text evidence="1">One of the primary rRNA binding proteins. Required for association of the 30S and 50S subunits to form the 70S ribosome, for tRNA binding and peptide bond formation. It has been suggested to have peptidyltransferase activity; this is somewhat controversial. Makes several contacts with the 16S rRNA in the 70S ribosome.</text>
</comment>
<comment type="subunit">
    <text evidence="1">Part of the 50S ribosomal subunit. Forms a bridge to the 30S subunit in the 70S ribosome.</text>
</comment>
<comment type="similarity">
    <text evidence="1">Belongs to the universal ribosomal protein uL2 family.</text>
</comment>
<reference key="1">
    <citation type="journal article" date="2009" name="Genome Res.">
        <title>Complete genome of the cellulolytic thermophile Acidothermus cellulolyticus 11B provides insights into its ecophysiological and evolutionary adaptations.</title>
        <authorList>
            <person name="Barabote R.D."/>
            <person name="Xie G."/>
            <person name="Leu D.H."/>
            <person name="Normand P."/>
            <person name="Necsulea A."/>
            <person name="Daubin V."/>
            <person name="Medigue C."/>
            <person name="Adney W.S."/>
            <person name="Xu X.C."/>
            <person name="Lapidus A."/>
            <person name="Parales R.E."/>
            <person name="Detter C."/>
            <person name="Pujic P."/>
            <person name="Bruce D."/>
            <person name="Lavire C."/>
            <person name="Challacombe J.F."/>
            <person name="Brettin T.S."/>
            <person name="Berry A.M."/>
        </authorList>
    </citation>
    <scope>NUCLEOTIDE SEQUENCE [LARGE SCALE GENOMIC DNA]</scope>
    <source>
        <strain>ATCC 43068 / DSM 8971 / 11B</strain>
    </source>
</reference>
<keyword id="KW-1185">Reference proteome</keyword>
<keyword id="KW-0687">Ribonucleoprotein</keyword>
<keyword id="KW-0689">Ribosomal protein</keyword>
<keyword id="KW-0694">RNA-binding</keyword>
<keyword id="KW-0699">rRNA-binding</keyword>
<accession>A0LRM3</accession>
<name>RL2_ACIC1</name>
<feature type="chain" id="PRO_0000309858" description="Large ribosomal subunit protein uL2">
    <location>
        <begin position="1"/>
        <end position="278"/>
    </location>
</feature>
<feature type="region of interest" description="Disordered" evidence="2">
    <location>
        <begin position="210"/>
        <end position="278"/>
    </location>
</feature>
<feature type="compositionally biased region" description="Basic residues" evidence="2">
    <location>
        <begin position="210"/>
        <end position="220"/>
    </location>
</feature>
<feature type="compositionally biased region" description="Basic residues" evidence="2">
    <location>
        <begin position="257"/>
        <end position="278"/>
    </location>
</feature>
<organism>
    <name type="scientific">Acidothermus cellulolyticus (strain ATCC 43068 / DSM 8971 / 11B)</name>
    <dbReference type="NCBI Taxonomy" id="351607"/>
    <lineage>
        <taxon>Bacteria</taxon>
        <taxon>Bacillati</taxon>
        <taxon>Actinomycetota</taxon>
        <taxon>Actinomycetes</taxon>
        <taxon>Acidothermales</taxon>
        <taxon>Acidothermaceae</taxon>
        <taxon>Acidothermus</taxon>
    </lineage>
</organism>
<sequence>MGIRKYKPTTPGRRGASVADFVEITREHPEKSLVRPLHSKGGRNVYGRITTRHQGGGHKRAYRLIDFKRADKDGVPAKVAHIEYDPNRTARIALLHYADGEKRYILAPARLAQGDVVESGPGADIKPGNNLPLRNIPVGTVVHAIELRPGGGAKIARSAGASVQLVAKEGMYAQLRMPSGEIRNVDIRCRATVGEVGNAEQSNISWGKAGRMRWKGKRPSVRGVAMNPIDHPLGGGEGKSSGGRHPVSPWGKPEGRTRRKHKPSDKLIVRRRKSNKKR</sequence>
<evidence type="ECO:0000255" key="1">
    <source>
        <dbReference type="HAMAP-Rule" id="MF_01320"/>
    </source>
</evidence>
<evidence type="ECO:0000256" key="2">
    <source>
        <dbReference type="SAM" id="MobiDB-lite"/>
    </source>
</evidence>
<evidence type="ECO:0000305" key="3"/>